<sequence>MKPSLIEKLKTLTYRYSEIGGLLSDSTVINDQDRYRELGKEYAQLEPIVKCFQQFQQNEKAIESAEEMQQEKDPELRKLAEEELEQLTLKKEELEDQLKLLLVPKDPNDERNVFLEIRAGTGGNEAAIFAGDLFRMYARYAETKGWRVNIVSAHEGEHGGFKEVIARVIGEGVYSQLKFESGAHRVQRVPVTESQGRIHTSACTVAIMPEVDEIDQIKINPAELRIDTFRASGAGGQHVNRTDSAIRITHLPTGVVVECQDERSQHKNKARAMSLLQSKLLAAERAKQDQEQAAKRKSLVGSGDRSERIRTYNFPQGRVTDHRINLTLYQLDEVIEGDLDPVIGPLIRELQAEQLAELSGE</sequence>
<gene>
    <name evidence="1" type="primary">prfA</name>
    <name type="ordered locus">CbuK_2016</name>
</gene>
<evidence type="ECO:0000255" key="1">
    <source>
        <dbReference type="HAMAP-Rule" id="MF_00093"/>
    </source>
</evidence>
<evidence type="ECO:0000256" key="2">
    <source>
        <dbReference type="SAM" id="MobiDB-lite"/>
    </source>
</evidence>
<accession>B6J625</accession>
<name>RF1_COXB1</name>
<proteinExistence type="inferred from homology"/>
<feature type="chain" id="PRO_1000093445" description="Peptide chain release factor 1">
    <location>
        <begin position="1"/>
        <end position="361"/>
    </location>
</feature>
<feature type="region of interest" description="Disordered" evidence="2">
    <location>
        <begin position="286"/>
        <end position="306"/>
    </location>
</feature>
<feature type="modified residue" description="N5-methylglutamine" evidence="1">
    <location>
        <position position="237"/>
    </location>
</feature>
<dbReference type="EMBL" id="CP001020">
    <property type="protein sequence ID" value="ACJ21116.1"/>
    <property type="molecule type" value="Genomic_DNA"/>
</dbReference>
<dbReference type="RefSeq" id="WP_005772919.1">
    <property type="nucleotide sequence ID" value="NC_011528.1"/>
</dbReference>
<dbReference type="SMR" id="B6J625"/>
<dbReference type="KEGG" id="cbc:CbuK_2016"/>
<dbReference type="HOGENOM" id="CLU_036856_0_1_6"/>
<dbReference type="GO" id="GO:0005737">
    <property type="term" value="C:cytoplasm"/>
    <property type="evidence" value="ECO:0007669"/>
    <property type="project" value="UniProtKB-SubCell"/>
</dbReference>
<dbReference type="GO" id="GO:0016149">
    <property type="term" value="F:translation release factor activity, codon specific"/>
    <property type="evidence" value="ECO:0007669"/>
    <property type="project" value="UniProtKB-UniRule"/>
</dbReference>
<dbReference type="FunFam" id="3.30.160.20:FF:000004">
    <property type="entry name" value="Peptide chain release factor 1"/>
    <property type="match status" value="1"/>
</dbReference>
<dbReference type="FunFam" id="3.30.70.1660:FF:000002">
    <property type="entry name" value="Peptide chain release factor 1"/>
    <property type="match status" value="1"/>
</dbReference>
<dbReference type="FunFam" id="3.30.70.1660:FF:000004">
    <property type="entry name" value="Peptide chain release factor 1"/>
    <property type="match status" value="1"/>
</dbReference>
<dbReference type="Gene3D" id="3.30.160.20">
    <property type="match status" value="1"/>
</dbReference>
<dbReference type="Gene3D" id="3.30.70.1660">
    <property type="match status" value="1"/>
</dbReference>
<dbReference type="Gene3D" id="6.10.140.1950">
    <property type="match status" value="1"/>
</dbReference>
<dbReference type="HAMAP" id="MF_00093">
    <property type="entry name" value="Rel_fac_1"/>
    <property type="match status" value="1"/>
</dbReference>
<dbReference type="InterPro" id="IPR005139">
    <property type="entry name" value="PCRF"/>
</dbReference>
<dbReference type="InterPro" id="IPR000352">
    <property type="entry name" value="Pep_chain_release_fac_I"/>
</dbReference>
<dbReference type="InterPro" id="IPR045853">
    <property type="entry name" value="Pep_chain_release_fac_I_sf"/>
</dbReference>
<dbReference type="InterPro" id="IPR050057">
    <property type="entry name" value="Prokaryotic/Mito_RF"/>
</dbReference>
<dbReference type="InterPro" id="IPR004373">
    <property type="entry name" value="RF-1"/>
</dbReference>
<dbReference type="NCBIfam" id="TIGR00019">
    <property type="entry name" value="prfA"/>
    <property type="match status" value="1"/>
</dbReference>
<dbReference type="NCBIfam" id="NF001859">
    <property type="entry name" value="PRK00591.1"/>
    <property type="match status" value="1"/>
</dbReference>
<dbReference type="PANTHER" id="PTHR43804">
    <property type="entry name" value="LD18447P"/>
    <property type="match status" value="1"/>
</dbReference>
<dbReference type="PANTHER" id="PTHR43804:SF7">
    <property type="entry name" value="LD18447P"/>
    <property type="match status" value="1"/>
</dbReference>
<dbReference type="Pfam" id="PF03462">
    <property type="entry name" value="PCRF"/>
    <property type="match status" value="1"/>
</dbReference>
<dbReference type="Pfam" id="PF00472">
    <property type="entry name" value="RF-1"/>
    <property type="match status" value="1"/>
</dbReference>
<dbReference type="SMART" id="SM00937">
    <property type="entry name" value="PCRF"/>
    <property type="match status" value="1"/>
</dbReference>
<dbReference type="SUPFAM" id="SSF75620">
    <property type="entry name" value="Release factor"/>
    <property type="match status" value="1"/>
</dbReference>
<dbReference type="PROSITE" id="PS00745">
    <property type="entry name" value="RF_PROK_I"/>
    <property type="match status" value="1"/>
</dbReference>
<organism>
    <name type="scientific">Coxiella burnetii (strain CbuK_Q154)</name>
    <name type="common">Coxiella burnetii (strain Q154)</name>
    <dbReference type="NCBI Taxonomy" id="434924"/>
    <lineage>
        <taxon>Bacteria</taxon>
        <taxon>Pseudomonadati</taxon>
        <taxon>Pseudomonadota</taxon>
        <taxon>Gammaproteobacteria</taxon>
        <taxon>Legionellales</taxon>
        <taxon>Coxiellaceae</taxon>
        <taxon>Coxiella</taxon>
    </lineage>
</organism>
<reference key="1">
    <citation type="journal article" date="2009" name="Infect. Immun.">
        <title>Comparative genomics reveal extensive transposon-mediated genomic plasticity and diversity among potential effector proteins within the genus Coxiella.</title>
        <authorList>
            <person name="Beare P.A."/>
            <person name="Unsworth N."/>
            <person name="Andoh M."/>
            <person name="Voth D.E."/>
            <person name="Omsland A."/>
            <person name="Gilk S.D."/>
            <person name="Williams K.P."/>
            <person name="Sobral B.W."/>
            <person name="Kupko J.J. III"/>
            <person name="Porcella S.F."/>
            <person name="Samuel J.E."/>
            <person name="Heinzen R.A."/>
        </authorList>
    </citation>
    <scope>NUCLEOTIDE SEQUENCE [LARGE SCALE GENOMIC DNA]</scope>
    <source>
        <strain>CbuK_Q154</strain>
    </source>
</reference>
<comment type="function">
    <text evidence="1">Peptide chain release factor 1 directs the termination of translation in response to the peptide chain termination codons UAG and UAA.</text>
</comment>
<comment type="subcellular location">
    <subcellularLocation>
        <location evidence="1">Cytoplasm</location>
    </subcellularLocation>
</comment>
<comment type="PTM">
    <text evidence="1">Methylated by PrmC. Methylation increases the termination efficiency of RF1.</text>
</comment>
<comment type="similarity">
    <text evidence="1">Belongs to the prokaryotic/mitochondrial release factor family.</text>
</comment>
<protein>
    <recommendedName>
        <fullName evidence="1">Peptide chain release factor 1</fullName>
        <shortName evidence="1">RF-1</shortName>
    </recommendedName>
</protein>
<keyword id="KW-0963">Cytoplasm</keyword>
<keyword id="KW-0488">Methylation</keyword>
<keyword id="KW-0648">Protein biosynthesis</keyword>